<reference key="1">
    <citation type="journal article" date="2006" name="Genome Biol.">
        <title>Genomic analysis reveals that Pseudomonas aeruginosa virulence is combinatorial.</title>
        <authorList>
            <person name="Lee D.G."/>
            <person name="Urbach J.M."/>
            <person name="Wu G."/>
            <person name="Liberati N.T."/>
            <person name="Feinbaum R.L."/>
            <person name="Miyata S."/>
            <person name="Diggins L.T."/>
            <person name="He J."/>
            <person name="Saucier M."/>
            <person name="Deziel E."/>
            <person name="Friedman L."/>
            <person name="Li L."/>
            <person name="Grills G."/>
            <person name="Montgomery K."/>
            <person name="Kucherlapati R."/>
            <person name="Rahme L.G."/>
            <person name="Ausubel F.M."/>
        </authorList>
    </citation>
    <scope>NUCLEOTIDE SEQUENCE [LARGE SCALE GENOMIC DNA]</scope>
    <source>
        <strain>UCBPP-PA14</strain>
    </source>
</reference>
<feature type="chain" id="PRO_0000304470" description="2-dehydro-3-deoxyphosphooctonate aldolase">
    <location>
        <begin position="1"/>
        <end position="281"/>
    </location>
</feature>
<name>KDSA_PSEAB</name>
<sequence>MAQKIVRVGDIQIGNDLPFVLFGGMNVLESRDLAMQVCEEYVRVTEKLGIPYVFKASFDKANRSSIHSFRGPGLEEGMKIFEEIKKTFKVPVITDVHEPFQAQPVAEVCDIIQLPAFLSRQTDLVVAMARTNAVINIKKAQFLAPQEMKHILTKCEEAGNDRLILCERGSSFGYNNLVVDMLGFGIMKQFEYPVFFDVTHALQMPGGRADSAGGRRAQVTDLAKAGLSQKLAGLFLEAHPDPEHAKCDGPCALRLNKLEAFLSQLKQLDELIKSFPAIETA</sequence>
<dbReference type="EC" id="2.5.1.55" evidence="1"/>
<dbReference type="EMBL" id="CP000438">
    <property type="protein sequence ID" value="ABJ12869.1"/>
    <property type="molecule type" value="Genomic_DNA"/>
</dbReference>
<dbReference type="RefSeq" id="WP_003092365.1">
    <property type="nucleotide sequence ID" value="NZ_CP034244.1"/>
</dbReference>
<dbReference type="SMR" id="Q02RA8"/>
<dbReference type="KEGG" id="pau:PA14_17310"/>
<dbReference type="PseudoCAP" id="PA14_17310"/>
<dbReference type="HOGENOM" id="CLU_036666_0_0_6"/>
<dbReference type="BioCyc" id="PAER208963:G1G74-1425-MONOMER"/>
<dbReference type="UniPathway" id="UPA00030"/>
<dbReference type="UniPathway" id="UPA00357">
    <property type="reaction ID" value="UER00474"/>
</dbReference>
<dbReference type="Proteomes" id="UP000000653">
    <property type="component" value="Chromosome"/>
</dbReference>
<dbReference type="GO" id="GO:0005737">
    <property type="term" value="C:cytoplasm"/>
    <property type="evidence" value="ECO:0007669"/>
    <property type="project" value="UniProtKB-SubCell"/>
</dbReference>
<dbReference type="GO" id="GO:0008676">
    <property type="term" value="F:3-deoxy-8-phosphooctulonate synthase activity"/>
    <property type="evidence" value="ECO:0007669"/>
    <property type="project" value="UniProtKB-UniRule"/>
</dbReference>
<dbReference type="GO" id="GO:0019294">
    <property type="term" value="P:keto-3-deoxy-D-manno-octulosonic acid biosynthetic process"/>
    <property type="evidence" value="ECO:0007669"/>
    <property type="project" value="UniProtKB-UniRule"/>
</dbReference>
<dbReference type="FunFam" id="3.20.20.70:FF:000058">
    <property type="entry name" value="2-dehydro-3-deoxyphosphooctonate aldolase"/>
    <property type="match status" value="1"/>
</dbReference>
<dbReference type="Gene3D" id="3.20.20.70">
    <property type="entry name" value="Aldolase class I"/>
    <property type="match status" value="1"/>
</dbReference>
<dbReference type="HAMAP" id="MF_00056">
    <property type="entry name" value="KDO8P_synth"/>
    <property type="match status" value="1"/>
</dbReference>
<dbReference type="InterPro" id="IPR013785">
    <property type="entry name" value="Aldolase_TIM"/>
</dbReference>
<dbReference type="InterPro" id="IPR006218">
    <property type="entry name" value="DAHP1/KDSA"/>
</dbReference>
<dbReference type="InterPro" id="IPR006269">
    <property type="entry name" value="KDO8P_synthase"/>
</dbReference>
<dbReference type="NCBIfam" id="TIGR01362">
    <property type="entry name" value="KDO8P_synth"/>
    <property type="match status" value="1"/>
</dbReference>
<dbReference type="NCBIfam" id="NF003543">
    <property type="entry name" value="PRK05198.1"/>
    <property type="match status" value="1"/>
</dbReference>
<dbReference type="NCBIfam" id="NF009109">
    <property type="entry name" value="PRK12457.1"/>
    <property type="match status" value="1"/>
</dbReference>
<dbReference type="PANTHER" id="PTHR21057">
    <property type="entry name" value="PHOSPHO-2-DEHYDRO-3-DEOXYHEPTONATE ALDOLASE"/>
    <property type="match status" value="1"/>
</dbReference>
<dbReference type="Pfam" id="PF00793">
    <property type="entry name" value="DAHP_synth_1"/>
    <property type="match status" value="1"/>
</dbReference>
<dbReference type="SUPFAM" id="SSF51569">
    <property type="entry name" value="Aldolase"/>
    <property type="match status" value="1"/>
</dbReference>
<gene>
    <name evidence="1" type="primary">kdsA</name>
    <name type="ordered locus">PA14_17310</name>
</gene>
<evidence type="ECO:0000255" key="1">
    <source>
        <dbReference type="HAMAP-Rule" id="MF_00056"/>
    </source>
</evidence>
<comment type="catalytic activity">
    <reaction evidence="1">
        <text>D-arabinose 5-phosphate + phosphoenolpyruvate + H2O = 3-deoxy-alpha-D-manno-2-octulosonate-8-phosphate + phosphate</text>
        <dbReference type="Rhea" id="RHEA:14053"/>
        <dbReference type="ChEBI" id="CHEBI:15377"/>
        <dbReference type="ChEBI" id="CHEBI:43474"/>
        <dbReference type="ChEBI" id="CHEBI:57693"/>
        <dbReference type="ChEBI" id="CHEBI:58702"/>
        <dbReference type="ChEBI" id="CHEBI:85985"/>
        <dbReference type="EC" id="2.5.1.55"/>
    </reaction>
</comment>
<comment type="pathway">
    <text evidence="1">Carbohydrate biosynthesis; 3-deoxy-D-manno-octulosonate biosynthesis; 3-deoxy-D-manno-octulosonate from D-ribulose 5-phosphate: step 2/3.</text>
</comment>
<comment type="pathway">
    <text evidence="1">Bacterial outer membrane biogenesis; lipopolysaccharide biosynthesis.</text>
</comment>
<comment type="subcellular location">
    <subcellularLocation>
        <location evidence="1">Cytoplasm</location>
    </subcellularLocation>
</comment>
<comment type="similarity">
    <text evidence="1">Belongs to the KdsA family.</text>
</comment>
<proteinExistence type="inferred from homology"/>
<protein>
    <recommendedName>
        <fullName evidence="1">2-dehydro-3-deoxyphosphooctonate aldolase</fullName>
        <ecNumber evidence="1">2.5.1.55</ecNumber>
    </recommendedName>
    <alternativeName>
        <fullName evidence="1">3-deoxy-D-manno-octulosonic acid 8-phosphate synthase</fullName>
    </alternativeName>
    <alternativeName>
        <fullName evidence="1">KDO-8-phosphate synthase</fullName>
        <shortName evidence="1">KDO 8-P synthase</shortName>
        <shortName evidence="1">KDOPS</shortName>
    </alternativeName>
    <alternativeName>
        <fullName evidence="1">Phospho-2-dehydro-3-deoxyoctonate aldolase</fullName>
    </alternativeName>
</protein>
<keyword id="KW-0963">Cytoplasm</keyword>
<keyword id="KW-0448">Lipopolysaccharide biosynthesis</keyword>
<keyword id="KW-0808">Transferase</keyword>
<accession>Q02RA8</accession>
<organism>
    <name type="scientific">Pseudomonas aeruginosa (strain UCBPP-PA14)</name>
    <dbReference type="NCBI Taxonomy" id="208963"/>
    <lineage>
        <taxon>Bacteria</taxon>
        <taxon>Pseudomonadati</taxon>
        <taxon>Pseudomonadota</taxon>
        <taxon>Gammaproteobacteria</taxon>
        <taxon>Pseudomonadales</taxon>
        <taxon>Pseudomonadaceae</taxon>
        <taxon>Pseudomonas</taxon>
    </lineage>
</organism>